<gene>
    <name evidence="8" type="primary">dpysl3</name>
</gene>
<feature type="chain" id="PRO_0000382468" description="Dihydropyrimidinase-related protein 3">
    <location>
        <begin position="1"/>
        <end position="567"/>
    </location>
</feature>
<feature type="region of interest" description="Disordered" evidence="2">
    <location>
        <begin position="505"/>
        <end position="567"/>
    </location>
</feature>
<feature type="compositionally biased region" description="Polar residues" evidence="2">
    <location>
        <begin position="513"/>
        <end position="524"/>
    </location>
</feature>
<reference evidence="5 7" key="1">
    <citation type="journal article" date="2005" name="Gene Expr. Patterns">
        <title>Expression of collapsin response mediator proteins in the nervous system of embryonic zebrafish.</title>
        <authorList>
            <person name="Schweitzer J."/>
            <person name="Becker C.G."/>
            <person name="Schachner M."/>
            <person name="Becker T."/>
        </authorList>
    </citation>
    <scope>NUCLEOTIDE SEQUENCE [MRNA]</scope>
    <scope>TISSUE SPECIFICITY</scope>
    <source>
        <tissue evidence="3">Brain</tissue>
    </source>
</reference>
<reference evidence="6" key="2">
    <citation type="submission" date="2008-04" db="EMBL/GenBank/DDBJ databases">
        <authorList>
            <consortium name="NIH - Zebrafish Gene Collection (ZGC) project"/>
        </authorList>
    </citation>
    <scope>NUCLEOTIDE SEQUENCE [LARGE SCALE MRNA]</scope>
</reference>
<sequence>MSYQGKKNIPKITSERLLIKGGRIVNDDQSFYADIYMEDGVIKQIGDNLIVPGGVKTIEANGKMVIPGGIDIHTHLQMPFRGTTTADDFTQGTKAALAGGTTMIVDHVIPEPGCSLLEAFDRWSKWADEKACCDYSLHVDITHWNDSVKQEVETLIKEKGVNSFQVYMAFKDLYQMSNTELYEVFTFLGEHGGIAQVHAENGEIIAEEQARMLEMGITGPEGHVLSRPEELEAEAVFRAVTIASQTNCPLYVTRVMSKSAADIISQARKKGNVVFGEPITASLGTDGTHYWSKNWAKAASFVTSPPLSPDPTTPDYLNTLLASGDLSVVGSAHCTFSVAQKAIGKDDFTQIPEGVNGAEERMSIIWDKAVVTGKMDENMFVAVTSTNAAKILNLYPRKGRIAVGSDSDLVIWDTDAVRTITAKTHHSAAEYNVFEGMELRGAPMLVVCQGKIVLEDGNLHATSGTGRFIPCSPFPDFAYKRVKARKQLAILKAVPRGMYDGPVSEFSPMSRGGTPSASTRTSPTKVPVRNLHQSGFTLSGPEEAPIRPAGRRIVVPPGGRSNITSLS</sequence>
<dbReference type="EMBL" id="AY987373">
    <property type="protein sequence ID" value="AAX86825.1"/>
    <property type="molecule type" value="mRNA"/>
</dbReference>
<dbReference type="EMBL" id="BC162272">
    <property type="protein sequence ID" value="AAI62272.1"/>
    <property type="molecule type" value="mRNA"/>
</dbReference>
<dbReference type="EMBL" id="BC162579">
    <property type="protein sequence ID" value="AAI62579.1"/>
    <property type="molecule type" value="mRNA"/>
</dbReference>
<dbReference type="RefSeq" id="NP_001018348.1">
    <property type="nucleotide sequence ID" value="NM_001020512.1"/>
</dbReference>
<dbReference type="SMR" id="Q52PJ5"/>
<dbReference type="FunCoup" id="Q52PJ5">
    <property type="interactions" value="924"/>
</dbReference>
<dbReference type="STRING" id="7955.ENSDARP00000065096"/>
<dbReference type="MEROPS" id="M38.976"/>
<dbReference type="PaxDb" id="7955-ENSDARP00000108688"/>
<dbReference type="Ensembl" id="ENSDART00000065097">
    <property type="protein sequence ID" value="ENSDARP00000065096"/>
    <property type="gene ID" value="ENSDARG00000002587"/>
</dbReference>
<dbReference type="GeneID" id="553166"/>
<dbReference type="KEGG" id="dre:553166"/>
<dbReference type="AGR" id="ZFIN:ZDB-GENE-050720-2"/>
<dbReference type="CTD" id="1809"/>
<dbReference type="ZFIN" id="ZDB-GENE-050720-2">
    <property type="gene designation" value="dpysl3"/>
</dbReference>
<dbReference type="eggNOG" id="KOG2584">
    <property type="taxonomic scope" value="Eukaryota"/>
</dbReference>
<dbReference type="HOGENOM" id="CLU_015572_2_2_1"/>
<dbReference type="InParanoid" id="Q52PJ5"/>
<dbReference type="OMA" id="WVTAEVT"/>
<dbReference type="OrthoDB" id="10258955at2759"/>
<dbReference type="PhylomeDB" id="Q52PJ5"/>
<dbReference type="TreeFam" id="TF314706"/>
<dbReference type="Reactome" id="R-DRE-399956">
    <property type="pathway name" value="CRMPs in Sema3A signaling"/>
</dbReference>
<dbReference type="PRO" id="PR:Q52PJ5"/>
<dbReference type="Proteomes" id="UP000000437">
    <property type="component" value="Chromosome 21"/>
</dbReference>
<dbReference type="Bgee" id="ENSDARG00000002587">
    <property type="expression patterns" value="Expressed in brain and 52 other cell types or tissues"/>
</dbReference>
<dbReference type="ExpressionAtlas" id="Q52PJ5">
    <property type="expression patterns" value="baseline"/>
</dbReference>
<dbReference type="GO" id="GO:0005829">
    <property type="term" value="C:cytosol"/>
    <property type="evidence" value="ECO:0000318"/>
    <property type="project" value="GO_Central"/>
</dbReference>
<dbReference type="GO" id="GO:0030426">
    <property type="term" value="C:growth cone"/>
    <property type="evidence" value="ECO:0007669"/>
    <property type="project" value="UniProtKB-SubCell"/>
</dbReference>
<dbReference type="GO" id="GO:0016812">
    <property type="term" value="F:hydrolase activity, acting on carbon-nitrogen (but not peptide) bonds, in cyclic amides"/>
    <property type="evidence" value="ECO:0000318"/>
    <property type="project" value="GO_Central"/>
</dbReference>
<dbReference type="GO" id="GO:0051764">
    <property type="term" value="P:actin crosslink formation"/>
    <property type="evidence" value="ECO:0000318"/>
    <property type="project" value="GO_Central"/>
</dbReference>
<dbReference type="GO" id="GO:0007411">
    <property type="term" value="P:axon guidance"/>
    <property type="evidence" value="ECO:0000315"/>
    <property type="project" value="ZFIN"/>
</dbReference>
<dbReference type="GO" id="GO:0007409">
    <property type="term" value="P:axonogenesis"/>
    <property type="evidence" value="ECO:0000316"/>
    <property type="project" value="ZFIN"/>
</dbReference>
<dbReference type="GO" id="GO:0030900">
    <property type="term" value="P:forebrain development"/>
    <property type="evidence" value="ECO:0000315"/>
    <property type="project" value="ZFIN"/>
</dbReference>
<dbReference type="GO" id="GO:0048936">
    <property type="term" value="P:peripheral nervous system neuron axonogenesis"/>
    <property type="evidence" value="ECO:0000315"/>
    <property type="project" value="ZFIN"/>
</dbReference>
<dbReference type="GO" id="GO:0050770">
    <property type="term" value="P:regulation of axonogenesis"/>
    <property type="evidence" value="ECO:0000315"/>
    <property type="project" value="ZFIN"/>
</dbReference>
<dbReference type="CDD" id="cd01314">
    <property type="entry name" value="D-HYD"/>
    <property type="match status" value="1"/>
</dbReference>
<dbReference type="FunFam" id="2.30.40.10:FF:000021">
    <property type="entry name" value="Dihydropyrimidinase-related protein 2"/>
    <property type="match status" value="1"/>
</dbReference>
<dbReference type="FunFam" id="3.20.20.140:FF:000174">
    <property type="entry name" value="Dihydropyrimidinase-related protein 2"/>
    <property type="match status" value="1"/>
</dbReference>
<dbReference type="Gene3D" id="3.20.20.140">
    <property type="entry name" value="Metal-dependent hydrolases"/>
    <property type="match status" value="1"/>
</dbReference>
<dbReference type="Gene3D" id="2.30.40.10">
    <property type="entry name" value="Urease, subunit C, domain 1"/>
    <property type="match status" value="1"/>
</dbReference>
<dbReference type="InterPro" id="IPR006680">
    <property type="entry name" value="Amidohydro-rel"/>
</dbReference>
<dbReference type="InterPro" id="IPR011778">
    <property type="entry name" value="Hydantoinase/dihydroPyrase"/>
</dbReference>
<dbReference type="InterPro" id="IPR011059">
    <property type="entry name" value="Metal-dep_hydrolase_composite"/>
</dbReference>
<dbReference type="InterPro" id="IPR032466">
    <property type="entry name" value="Metal_Hydrolase"/>
</dbReference>
<dbReference type="InterPro" id="IPR050378">
    <property type="entry name" value="Metallo-dep_Hydrolases_sf"/>
</dbReference>
<dbReference type="NCBIfam" id="TIGR02033">
    <property type="entry name" value="D-hydantoinase"/>
    <property type="match status" value="1"/>
</dbReference>
<dbReference type="PANTHER" id="PTHR11647:SF57">
    <property type="entry name" value="DIHYDROPYRIMIDINASE-RELATED PROTEIN 3"/>
    <property type="match status" value="1"/>
</dbReference>
<dbReference type="PANTHER" id="PTHR11647">
    <property type="entry name" value="HYDRANTOINASE/DIHYDROPYRIMIDINASE FAMILY MEMBER"/>
    <property type="match status" value="1"/>
</dbReference>
<dbReference type="Pfam" id="PF01979">
    <property type="entry name" value="Amidohydro_1"/>
    <property type="match status" value="1"/>
</dbReference>
<dbReference type="SUPFAM" id="SSF51338">
    <property type="entry name" value="Composite domain of metallo-dependent hydrolases"/>
    <property type="match status" value="1"/>
</dbReference>
<dbReference type="SUPFAM" id="SSF51556">
    <property type="entry name" value="Metallo-dependent hydrolases"/>
    <property type="match status" value="1"/>
</dbReference>
<keyword id="KW-0966">Cell projection</keyword>
<keyword id="KW-0963">Cytoplasm</keyword>
<keyword id="KW-1185">Reference proteome</keyword>
<name>DPYL3_DANRE</name>
<accession>Q52PJ5</accession>
<evidence type="ECO:0000250" key="1">
    <source>
        <dbReference type="UniProtKB" id="Q62952"/>
    </source>
</evidence>
<evidence type="ECO:0000256" key="2">
    <source>
        <dbReference type="SAM" id="MobiDB-lite"/>
    </source>
</evidence>
<evidence type="ECO:0000269" key="3">
    <source>
    </source>
</evidence>
<evidence type="ECO:0000303" key="4">
    <source>
    </source>
</evidence>
<evidence type="ECO:0000305" key="5"/>
<evidence type="ECO:0000312" key="6">
    <source>
        <dbReference type="EMBL" id="AAI62272.1"/>
    </source>
</evidence>
<evidence type="ECO:0000312" key="7">
    <source>
        <dbReference type="EMBL" id="AAX86825.1"/>
    </source>
</evidence>
<evidence type="ECO:0000312" key="8">
    <source>
        <dbReference type="ZFIN" id="ZDB-GENE-050720-2"/>
    </source>
</evidence>
<organism>
    <name type="scientific">Danio rerio</name>
    <name type="common">Zebrafish</name>
    <name type="synonym">Brachydanio rerio</name>
    <dbReference type="NCBI Taxonomy" id="7955"/>
    <lineage>
        <taxon>Eukaryota</taxon>
        <taxon>Metazoa</taxon>
        <taxon>Chordata</taxon>
        <taxon>Craniata</taxon>
        <taxon>Vertebrata</taxon>
        <taxon>Euteleostomi</taxon>
        <taxon>Actinopterygii</taxon>
        <taxon>Neopterygii</taxon>
        <taxon>Teleostei</taxon>
        <taxon>Ostariophysi</taxon>
        <taxon>Cypriniformes</taxon>
        <taxon>Danionidae</taxon>
        <taxon>Danioninae</taxon>
        <taxon>Danio</taxon>
    </lineage>
</organism>
<comment type="function">
    <text evidence="1">Necessary for signaling by class 3 semaphorins and subsequent remodeling of the cytoskeleton. Plays a role in axon guidance, neuronal growth cone collapse and cell migration (By similarity).</text>
</comment>
<comment type="subunit">
    <text evidence="1">Homotetramer, and heterotetramer.</text>
</comment>
<comment type="subcellular location">
    <subcellularLocation>
        <location evidence="1">Cytoplasm</location>
    </subcellularLocation>
    <subcellularLocation>
        <location evidence="1">Cell projection</location>
        <location evidence="1">Growth cone</location>
    </subcellularLocation>
</comment>
<comment type="tissue specificity">
    <text evidence="3">At 16 hours post-fertilization, expressed in the presumptive nucleus of the medial longitudinal fascicle, the presumptive trigeminal ganglion and the spinal cord. Expression in the spinal cord is strongest towards the rostral, more mature, spinal cord, and weaker towards the caudal spinal cord. At 24 hours post-fertilization, expressed in the olfactory placode, in the telencephalon and diencephalon but not in the proliferating ventricular zone. Expressed in the epiphysis, the nucleus of the medial longitudinal fascicle and in the area close to the nucleus of the posterior commissure. Expression in the hindbrain is restricted to reticulospinal neurons. In the cranial ganglia, expressed in the trigeminal, acoustic/anterior lateral line and posterior lateral line ganglion. In the spinal cord, expressed in the large dorsally-located Rohon-Beard neurons.</text>
</comment>
<comment type="similarity">
    <text evidence="5">Belongs to the metallo-dependent hydrolases superfamily. Hydantoinase/dihydropyrimidinase family.</text>
</comment>
<comment type="caution">
    <text evidence="5">Lacks most of the conserved residues that are essential for binding the metal cofactor and hence for dihydropyrimidinase activity. Its enzyme activity is therefore unsure.</text>
</comment>
<protein>
    <recommendedName>
        <fullName evidence="1">Dihydropyrimidinase-related protein 3</fullName>
        <shortName evidence="1">DRP-3</shortName>
    </recommendedName>
    <alternativeName>
        <fullName evidence="7">Collapsin response mediator protein 4</fullName>
        <shortName evidence="4">CRMP-4</shortName>
    </alternativeName>
</protein>
<proteinExistence type="evidence at transcript level"/>